<sequence>MFRTKRSALVRRLWRSRAPGGEDEEEGVGGGGGGGELRGEGATDGRAYGAGGGGAGRAGCCLGKAVRGAKGHHHPHPPTSGAGAAGGAEADLKALTHSVLKKLKERQLELLLQAVESRGGTRTACLLLPGRLDCRLGPGAPASAQPAQPPSSYSLPLLLCKVFRWPDLRHSSEVKRLCCCESYGKINPELVCCNPHHLSRLCELESPPPPYSRYPMDFLKPTAGCPDAVPSSAETGGTNYLAPGGLSDSQLLLEPGDRSHWCVVAYWEEKTRVGRLYCVQEPSLDIFYDLPQGNGFCLGQLNSDNKSQLVQKVRSKIGCGIQLTREVDGVWVYNRSSYPIFIKSATLDNPDSRTLLVHKVFPGFSIKAFDYEKAYSLQRPNDHEFMQQPWTGFTVQISFVKGWGQCYTRQFISSCPCWLEVIFNSR</sequence>
<organism>
    <name type="scientific">Mus musculus</name>
    <name type="common">Mouse</name>
    <dbReference type="NCBI Taxonomy" id="10090"/>
    <lineage>
        <taxon>Eukaryota</taxon>
        <taxon>Metazoa</taxon>
        <taxon>Chordata</taxon>
        <taxon>Craniata</taxon>
        <taxon>Vertebrata</taxon>
        <taxon>Euteleostomi</taxon>
        <taxon>Mammalia</taxon>
        <taxon>Eutheria</taxon>
        <taxon>Euarchontoglires</taxon>
        <taxon>Glires</taxon>
        <taxon>Rodentia</taxon>
        <taxon>Myomorpha</taxon>
        <taxon>Muroidea</taxon>
        <taxon>Muridae</taxon>
        <taxon>Murinae</taxon>
        <taxon>Mus</taxon>
        <taxon>Mus</taxon>
    </lineage>
</organism>
<protein>
    <recommendedName>
        <fullName>Mothers against decapentaplegic homolog 7</fullName>
        <shortName>MAD homolog 7</shortName>
        <shortName>Mothers against DPP homolog 7</shortName>
    </recommendedName>
    <alternativeName>
        <fullName>Mothers against decapentaplegic homolog 8</fullName>
        <shortName>MAD homolog 8</shortName>
        <shortName>Mothers against DPP homolog 8</shortName>
    </alternativeName>
    <alternativeName>
        <fullName>SMAD family member 7</fullName>
        <shortName>SMAD 7</shortName>
        <shortName>Smad7</shortName>
    </alternativeName>
</protein>
<reference key="1">
    <citation type="journal article" date="1997" name="Nature">
        <title>Identification of Smad7, a TGFbeta-inducible antagonist of TGF-beta signalling.</title>
        <authorList>
            <person name="Nakao A."/>
            <person name="Afrakhte M."/>
            <person name="Moren A."/>
            <person name="Nakayama T."/>
            <person name="Christian J.L."/>
            <person name="Heuchel R."/>
            <person name="Itoh S."/>
            <person name="Kawabata M."/>
            <person name="Heldin N.-E."/>
            <person name="Heldin C.-H."/>
            <person name="ten Dijke P."/>
        </authorList>
    </citation>
    <scope>NUCLEOTIDE SEQUENCE [MRNA] (ISOFORM A)</scope>
    <source>
        <tissue>Placenta</tissue>
    </source>
</reference>
<reference key="2">
    <citation type="submission" date="1997-07" db="EMBL/GenBank/DDBJ databases">
        <title>Characterization of a novel mouse homologue of Mad, Smad7, that can mediate TGF-beta family signalling.</title>
        <authorList>
            <person name="Kitamura K."/>
            <person name="Okazaki K."/>
        </authorList>
    </citation>
    <scope>NUCLEOTIDE SEQUENCE [MRNA] (ISOFORM A)</scope>
    <source>
        <tissue>Embryo</tissue>
    </source>
</reference>
<reference key="3">
    <citation type="submission" date="1997-07" db="EMBL/GenBank/DDBJ databases">
        <title>Isolation of cDNAs encoding mouse homologues of Mad (Smad7 and Smad7B) that can mediate TGF-beta family signalling.</title>
        <authorList>
            <person name="Kitamura K."/>
            <person name="Okazaki K."/>
        </authorList>
    </citation>
    <scope>NUCLEOTIDE SEQUENCE [MRNA] (ISOFORMS A AND B)</scope>
    <source>
        <tissue>Embryo</tissue>
    </source>
</reference>
<reference key="4">
    <citation type="journal article" date="2000" name="Blood">
        <title>Smad7 selectively interferes with different pathways of activin signaling and inhibits erythroid leukemia cell differentiation.</title>
        <authorList>
            <person name="Kitamura K."/>
            <person name="Aota S."/>
            <person name="Sakamoto R."/>
            <person name="Yoshikawa S.I."/>
            <person name="Okazaki K."/>
        </authorList>
    </citation>
    <scope>NUCLEOTIDE SEQUENCE [MRNA] (ISOFORMS A AND B)</scope>
</reference>
<reference key="5">
    <citation type="journal article" date="2001" name="J. Biol. Chem.">
        <title>Phosphorylation of Smad7 at Ser-249 does not interfere with its inhibitory role in transforming growth factor-beta-dependent signaling but affects Smad7-dependent transcriptional activation.</title>
        <authorList>
            <person name="Pulaski L."/>
            <person name="Landstrom M."/>
            <person name="Heldin C.-H."/>
            <person name="Souchelnytskyi S."/>
        </authorList>
    </citation>
    <scope>PHOSPHORYLATION AT SER-249</scope>
    <scope>MUTAGENESIS OF SER-249</scope>
    <scope>SUBCELLULAR LOCATION</scope>
</reference>
<reference key="6">
    <citation type="journal article" date="2003" name="EMBO J.">
        <title>Arkadia amplifies TGF-beta superfamily signaling through degradation of Smad7.</title>
        <authorList>
            <person name="Koinuma D."/>
            <person name="Shinozaki M."/>
            <person name="Komuro A."/>
            <person name="Goto K."/>
            <person name="Saitoh M."/>
            <person name="Hanyu A."/>
            <person name="Ebina M."/>
            <person name="Nukiwa T."/>
            <person name="Miyazawa K."/>
            <person name="Imamura T."/>
            <person name="Miyazono K."/>
        </authorList>
    </citation>
    <scope>INTERACTION WITH RNF111</scope>
    <scope>UBIQUITINATION</scope>
</reference>
<reference key="7">
    <citation type="journal article" date="2004" name="Oncogene">
        <title>Negative regulation of transforming growth factor-beta (TGF-beta) signaling by WW domain-containing protein 1 (WWP1).</title>
        <authorList>
            <person name="Komuro A."/>
            <person name="Imamura T."/>
            <person name="Saitoh M."/>
            <person name="Yoshida Y."/>
            <person name="Yamori T."/>
            <person name="Miyazono K."/>
            <person name="Miyazawa K."/>
        </authorList>
    </citation>
    <scope>INTERACTION WITH WWP1</scope>
    <scope>UBIQUITINATION</scope>
</reference>
<reference key="8">
    <citation type="journal article" date="2005" name="Biochem. J.">
        <title>NEDD4-2 (neural precursor cell expressed, developmentally down-regulated 4-2) negatively regulates TGF-beta (transforming growth factor-beta) signalling by inducing ubiquitin-mediated degradation of Smad2 and TGF-beta type I receptor.</title>
        <authorList>
            <person name="Kuratomi G."/>
            <person name="Komuro A."/>
            <person name="Goto K."/>
            <person name="Shinozaki M."/>
            <person name="Miyazawa K."/>
            <person name="Miyazono K."/>
            <person name="Imamura T."/>
        </authorList>
    </citation>
    <scope>INTERACTION WITH NEDD4L</scope>
    <scope>SUBCELLULAR LOCATION</scope>
</reference>
<reference key="9">
    <citation type="journal article" date="2013" name="PLoS Biol.">
        <title>Rnf165/Ark2C enhances BMP-Smad signaling to mediate motor axon extension.</title>
        <authorList>
            <person name="Kelly C.E."/>
            <person name="Thymiakou E."/>
            <person name="Dixon J.E."/>
            <person name="Tanaka S."/>
            <person name="Godwin J."/>
            <person name="Episkopou V."/>
        </authorList>
    </citation>
    <scope>UBIQUITINATION</scope>
</reference>
<dbReference type="EMBL" id="AF015260">
    <property type="protein sequence ID" value="AAB81353.1"/>
    <property type="molecule type" value="mRNA"/>
</dbReference>
<dbReference type="EMBL" id="AJ000550">
    <property type="protein sequence ID" value="CAA04182.1"/>
    <property type="molecule type" value="mRNA"/>
</dbReference>
<dbReference type="EMBL" id="AJ000551">
    <property type="protein sequence ID" value="CAA04183.1"/>
    <property type="molecule type" value="mRNA"/>
</dbReference>
<dbReference type="CCDS" id="CCDS37860.1">
    <molecule id="O35253-1"/>
</dbReference>
<dbReference type="RefSeq" id="NP_001036125.1">
    <molecule id="O35253-1"/>
    <property type="nucleotide sequence ID" value="NM_001042660.1"/>
</dbReference>
<dbReference type="RefSeq" id="XP_006525766.1">
    <molecule id="O35253-2"/>
    <property type="nucleotide sequence ID" value="XM_006525703.3"/>
</dbReference>
<dbReference type="PDB" id="7CD1">
    <property type="method" value="X-ray"/>
    <property type="resolution" value="1.89 A"/>
    <property type="chains" value="A/B/C/D=247-426"/>
</dbReference>
<dbReference type="PDBsum" id="7CD1"/>
<dbReference type="BMRB" id="O35253"/>
<dbReference type="SMR" id="O35253"/>
<dbReference type="BioGRID" id="201280">
    <property type="interactions" value="27"/>
</dbReference>
<dbReference type="FunCoup" id="O35253">
    <property type="interactions" value="1707"/>
</dbReference>
<dbReference type="IntAct" id="O35253">
    <property type="interactions" value="8"/>
</dbReference>
<dbReference type="MINT" id="O35253"/>
<dbReference type="STRING" id="10090.ENSMUSP00000026999"/>
<dbReference type="iPTMnet" id="O35253"/>
<dbReference type="PhosphoSitePlus" id="O35253"/>
<dbReference type="PaxDb" id="10090-ENSMUSP00000026999"/>
<dbReference type="ProteomicsDB" id="257257">
    <molecule id="O35253-1"/>
</dbReference>
<dbReference type="ProteomicsDB" id="257258">
    <molecule id="O35253-2"/>
</dbReference>
<dbReference type="Antibodypedia" id="9268">
    <property type="antibodies" value="532 antibodies from 39 providers"/>
</dbReference>
<dbReference type="DNASU" id="17131"/>
<dbReference type="Ensembl" id="ENSMUST00000026999.10">
    <molecule id="O35253-1"/>
    <property type="protein sequence ID" value="ENSMUSP00000026999.4"/>
    <property type="gene ID" value="ENSMUSG00000025880.13"/>
</dbReference>
<dbReference type="GeneID" id="17131"/>
<dbReference type="KEGG" id="mmu:17131"/>
<dbReference type="UCSC" id="uc008fqd.1">
    <molecule id="O35253-1"/>
    <property type="organism name" value="mouse"/>
</dbReference>
<dbReference type="UCSC" id="uc008fqe.2">
    <molecule id="O35253-2"/>
    <property type="organism name" value="mouse"/>
</dbReference>
<dbReference type="AGR" id="MGI:1100518"/>
<dbReference type="CTD" id="4092"/>
<dbReference type="MGI" id="MGI:1100518">
    <property type="gene designation" value="Smad7"/>
</dbReference>
<dbReference type="VEuPathDB" id="HostDB:ENSMUSG00000025880"/>
<dbReference type="eggNOG" id="KOG3701">
    <property type="taxonomic scope" value="Eukaryota"/>
</dbReference>
<dbReference type="GeneTree" id="ENSGT00940000159872"/>
<dbReference type="HOGENOM" id="CLU_026736_2_0_1"/>
<dbReference type="InParanoid" id="O35253"/>
<dbReference type="OMA" id="CKIFRWP"/>
<dbReference type="OrthoDB" id="5946219at2759"/>
<dbReference type="PhylomeDB" id="O35253"/>
<dbReference type="TreeFam" id="TF314923"/>
<dbReference type="Reactome" id="R-MMU-201451">
    <property type="pathway name" value="Signaling by BMP"/>
</dbReference>
<dbReference type="Reactome" id="R-MMU-2173788">
    <property type="pathway name" value="Downregulation of TGF-beta receptor signaling"/>
</dbReference>
<dbReference type="Reactome" id="R-MMU-2173796">
    <property type="pathway name" value="SMAD2/SMAD3:SMAD4 heterotrimer regulates transcription"/>
</dbReference>
<dbReference type="Reactome" id="R-MMU-5689880">
    <property type="pathway name" value="Ub-specific processing proteases"/>
</dbReference>
<dbReference type="BioGRID-ORCS" id="17131">
    <property type="hits" value="13 hits in 82 CRISPR screens"/>
</dbReference>
<dbReference type="ChiTaRS" id="Smad7">
    <property type="organism name" value="mouse"/>
</dbReference>
<dbReference type="PRO" id="PR:O35253"/>
<dbReference type="Proteomes" id="UP000000589">
    <property type="component" value="Chromosome 18"/>
</dbReference>
<dbReference type="RNAct" id="O35253">
    <property type="molecule type" value="protein"/>
</dbReference>
<dbReference type="Bgee" id="ENSMUSG00000025880">
    <property type="expression patterns" value="Expressed in molar tooth and 269 other cell types or tissues"/>
</dbReference>
<dbReference type="ExpressionAtlas" id="O35253">
    <property type="expression patterns" value="baseline and differential"/>
</dbReference>
<dbReference type="GO" id="GO:0005912">
    <property type="term" value="C:adherens junction"/>
    <property type="evidence" value="ECO:0007669"/>
    <property type="project" value="Ensembl"/>
</dbReference>
<dbReference type="GO" id="GO:0005813">
    <property type="term" value="C:centrosome"/>
    <property type="evidence" value="ECO:0007669"/>
    <property type="project" value="Ensembl"/>
</dbReference>
<dbReference type="GO" id="GO:0036064">
    <property type="term" value="C:ciliary basal body"/>
    <property type="evidence" value="ECO:0007669"/>
    <property type="project" value="Ensembl"/>
</dbReference>
<dbReference type="GO" id="GO:0005829">
    <property type="term" value="C:cytosol"/>
    <property type="evidence" value="ECO:0000304"/>
    <property type="project" value="Reactome"/>
</dbReference>
<dbReference type="GO" id="GO:0001650">
    <property type="term" value="C:fibrillar center"/>
    <property type="evidence" value="ECO:0007669"/>
    <property type="project" value="Ensembl"/>
</dbReference>
<dbReference type="GO" id="GO:0005654">
    <property type="term" value="C:nucleoplasm"/>
    <property type="evidence" value="ECO:0000304"/>
    <property type="project" value="Reactome"/>
</dbReference>
<dbReference type="GO" id="GO:0005634">
    <property type="term" value="C:nucleus"/>
    <property type="evidence" value="ECO:0000314"/>
    <property type="project" value="MGI"/>
</dbReference>
<dbReference type="GO" id="GO:0005886">
    <property type="term" value="C:plasma membrane"/>
    <property type="evidence" value="ECO:0007669"/>
    <property type="project" value="Ensembl"/>
</dbReference>
<dbReference type="GO" id="GO:0032991">
    <property type="term" value="C:protein-containing complex"/>
    <property type="evidence" value="ECO:0000314"/>
    <property type="project" value="MGI"/>
</dbReference>
<dbReference type="GO" id="GO:0005667">
    <property type="term" value="C:transcription regulator complex"/>
    <property type="evidence" value="ECO:0007669"/>
    <property type="project" value="InterPro"/>
</dbReference>
<dbReference type="GO" id="GO:0070697">
    <property type="term" value="F:activin receptor binding"/>
    <property type="evidence" value="ECO:0007669"/>
    <property type="project" value="Ensembl"/>
</dbReference>
<dbReference type="GO" id="GO:0008013">
    <property type="term" value="F:beta-catenin binding"/>
    <property type="evidence" value="ECO:0007669"/>
    <property type="project" value="Ensembl"/>
</dbReference>
<dbReference type="GO" id="GO:0005518">
    <property type="term" value="F:collagen binding"/>
    <property type="evidence" value="ECO:0000353"/>
    <property type="project" value="MGI"/>
</dbReference>
<dbReference type="GO" id="GO:0070411">
    <property type="term" value="F:I-SMAD binding"/>
    <property type="evidence" value="ECO:0007669"/>
    <property type="project" value="Ensembl"/>
</dbReference>
<dbReference type="GO" id="GO:0046872">
    <property type="term" value="F:metal ion binding"/>
    <property type="evidence" value="ECO:0007669"/>
    <property type="project" value="UniProtKB-KW"/>
</dbReference>
<dbReference type="GO" id="GO:0003714">
    <property type="term" value="F:transcription corepressor activity"/>
    <property type="evidence" value="ECO:0007669"/>
    <property type="project" value="Ensembl"/>
</dbReference>
<dbReference type="GO" id="GO:0140416">
    <property type="term" value="F:transcription regulator inhibitor activity"/>
    <property type="evidence" value="ECO:0007669"/>
    <property type="project" value="Ensembl"/>
</dbReference>
<dbReference type="GO" id="GO:0034713">
    <property type="term" value="F:type I transforming growth factor beta receptor binding"/>
    <property type="evidence" value="ECO:0007669"/>
    <property type="project" value="Ensembl"/>
</dbReference>
<dbReference type="GO" id="GO:0031625">
    <property type="term" value="F:ubiquitin protein ligase binding"/>
    <property type="evidence" value="ECO:0007669"/>
    <property type="project" value="Ensembl"/>
</dbReference>
<dbReference type="GO" id="GO:1990756">
    <property type="term" value="F:ubiquitin-like ligase-substrate adaptor activity"/>
    <property type="evidence" value="ECO:0007669"/>
    <property type="project" value="Ensembl"/>
</dbReference>
<dbReference type="GO" id="GO:0034333">
    <property type="term" value="P:adherens junction assembly"/>
    <property type="evidence" value="ECO:0007669"/>
    <property type="project" value="Ensembl"/>
</dbReference>
<dbReference type="GO" id="GO:0048844">
    <property type="term" value="P:artery morphogenesis"/>
    <property type="evidence" value="ECO:0000315"/>
    <property type="project" value="BHF-UCL"/>
</dbReference>
<dbReference type="GO" id="GO:1904886">
    <property type="term" value="P:beta-catenin destruction complex disassembly"/>
    <property type="evidence" value="ECO:0007669"/>
    <property type="project" value="Ensembl"/>
</dbReference>
<dbReference type="GO" id="GO:1990830">
    <property type="term" value="P:cellular response to leukemia inhibitory factor"/>
    <property type="evidence" value="ECO:0000270"/>
    <property type="project" value="MGI"/>
</dbReference>
<dbReference type="GO" id="GO:0032926">
    <property type="term" value="P:negative regulation of activin receptor signaling pathway"/>
    <property type="evidence" value="ECO:0007669"/>
    <property type="project" value="Ensembl"/>
</dbReference>
<dbReference type="GO" id="GO:0030514">
    <property type="term" value="P:negative regulation of BMP signaling pathway"/>
    <property type="evidence" value="ECO:0000314"/>
    <property type="project" value="MGI"/>
</dbReference>
<dbReference type="GO" id="GO:1902731">
    <property type="term" value="P:negative regulation of chondrocyte proliferation"/>
    <property type="evidence" value="ECO:0000314"/>
    <property type="project" value="CACAO"/>
</dbReference>
<dbReference type="GO" id="GO:0030279">
    <property type="term" value="P:negative regulation of ossification"/>
    <property type="evidence" value="ECO:0000314"/>
    <property type="project" value="CACAO"/>
</dbReference>
<dbReference type="GO" id="GO:0060392">
    <property type="term" value="P:negative regulation of SMAD protein signal transduction"/>
    <property type="evidence" value="ECO:0000315"/>
    <property type="project" value="BHF-UCL"/>
</dbReference>
<dbReference type="GO" id="GO:0002725">
    <property type="term" value="P:negative regulation of T cell cytokine production"/>
    <property type="evidence" value="ECO:0000315"/>
    <property type="project" value="BHF-UCL"/>
</dbReference>
<dbReference type="GO" id="GO:2000320">
    <property type="term" value="P:negative regulation of T-helper 17 cell differentiation"/>
    <property type="evidence" value="ECO:0000315"/>
    <property type="project" value="BHF-UCL"/>
</dbReference>
<dbReference type="GO" id="GO:2000317">
    <property type="term" value="P:negative regulation of T-helper 17 type immune response"/>
    <property type="evidence" value="ECO:0000315"/>
    <property type="project" value="BHF-UCL"/>
</dbReference>
<dbReference type="GO" id="GO:0010944">
    <property type="term" value="P:negative regulation of transcription by competitive promoter binding"/>
    <property type="evidence" value="ECO:0007669"/>
    <property type="project" value="Ensembl"/>
</dbReference>
<dbReference type="GO" id="GO:0000122">
    <property type="term" value="P:negative regulation of transcription by RNA polymerase II"/>
    <property type="evidence" value="ECO:0007669"/>
    <property type="project" value="Ensembl"/>
</dbReference>
<dbReference type="GO" id="GO:0030512">
    <property type="term" value="P:negative regulation of transforming growth factor beta receptor signaling pathway"/>
    <property type="evidence" value="ECO:0000250"/>
    <property type="project" value="UniProtKB"/>
</dbReference>
<dbReference type="GO" id="GO:2000049">
    <property type="term" value="P:positive regulation of cell-cell adhesion mediated by cadherin"/>
    <property type="evidence" value="ECO:0000315"/>
    <property type="project" value="BHF-UCL"/>
</dbReference>
<dbReference type="GO" id="GO:1903043">
    <property type="term" value="P:positive regulation of chondrocyte hypertrophy"/>
    <property type="evidence" value="ECO:0000314"/>
    <property type="project" value="CACAO"/>
</dbReference>
<dbReference type="GO" id="GO:0050821">
    <property type="term" value="P:protein stabilization"/>
    <property type="evidence" value="ECO:0007669"/>
    <property type="project" value="Ensembl"/>
</dbReference>
<dbReference type="GO" id="GO:0031503">
    <property type="term" value="P:protein-containing complex localization"/>
    <property type="evidence" value="ECO:0007669"/>
    <property type="project" value="Ensembl"/>
</dbReference>
<dbReference type="GO" id="GO:0055117">
    <property type="term" value="P:regulation of cardiac muscle contraction"/>
    <property type="evidence" value="ECO:0000315"/>
    <property type="project" value="BHF-UCL"/>
</dbReference>
<dbReference type="GO" id="GO:0010717">
    <property type="term" value="P:regulation of epithelial to mesenchymal transition"/>
    <property type="evidence" value="ECO:0007669"/>
    <property type="project" value="Ensembl"/>
</dbReference>
<dbReference type="GO" id="GO:0017015">
    <property type="term" value="P:regulation of transforming growth factor beta receptor signaling pathway"/>
    <property type="evidence" value="ECO:0000315"/>
    <property type="project" value="BHF-UCL"/>
</dbReference>
<dbReference type="GO" id="GO:0060373">
    <property type="term" value="P:regulation of ventricular cardiac muscle cell membrane depolarization"/>
    <property type="evidence" value="ECO:0000315"/>
    <property type="project" value="BHF-UCL"/>
</dbReference>
<dbReference type="GO" id="GO:0034616">
    <property type="term" value="P:response to laminar fluid shear stress"/>
    <property type="evidence" value="ECO:0007669"/>
    <property type="project" value="Ensembl"/>
</dbReference>
<dbReference type="GO" id="GO:0060395">
    <property type="term" value="P:SMAD protein signal transduction"/>
    <property type="evidence" value="ECO:0000315"/>
    <property type="project" value="BHF-UCL"/>
</dbReference>
<dbReference type="GO" id="GO:0007179">
    <property type="term" value="P:transforming growth factor beta receptor signaling pathway"/>
    <property type="evidence" value="ECO:0000314"/>
    <property type="project" value="MGI"/>
</dbReference>
<dbReference type="GO" id="GO:0001657">
    <property type="term" value="P:ureteric bud development"/>
    <property type="evidence" value="ECO:0000270"/>
    <property type="project" value="UniProtKB"/>
</dbReference>
<dbReference type="GO" id="GO:0055010">
    <property type="term" value="P:ventricular cardiac muscle tissue morphogenesis"/>
    <property type="evidence" value="ECO:0000315"/>
    <property type="project" value="BHF-UCL"/>
</dbReference>
<dbReference type="GO" id="GO:0060412">
    <property type="term" value="P:ventricular septum morphogenesis"/>
    <property type="evidence" value="ECO:0000315"/>
    <property type="project" value="BHF-UCL"/>
</dbReference>
<dbReference type="CDD" id="cd10494">
    <property type="entry name" value="MH1_SMAD_7"/>
    <property type="match status" value="1"/>
</dbReference>
<dbReference type="CDD" id="cd10500">
    <property type="entry name" value="MH2_SMAD_7"/>
    <property type="match status" value="1"/>
</dbReference>
<dbReference type="FunFam" id="2.60.200.10:FF:000004">
    <property type="entry name" value="Mothers against decapentaplegic homolog"/>
    <property type="match status" value="1"/>
</dbReference>
<dbReference type="FunFam" id="3.90.520.10:FF:000003">
    <property type="entry name" value="Mothers against decapentaplegic homolog"/>
    <property type="match status" value="1"/>
</dbReference>
<dbReference type="Gene3D" id="2.60.200.10">
    <property type="match status" value="1"/>
</dbReference>
<dbReference type="Gene3D" id="3.90.520.10">
    <property type="entry name" value="SMAD MH1 domain"/>
    <property type="match status" value="1"/>
</dbReference>
<dbReference type="InterPro" id="IPR013790">
    <property type="entry name" value="Dwarfin"/>
</dbReference>
<dbReference type="InterPro" id="IPR003619">
    <property type="entry name" value="MAD_homology1_Dwarfin-type"/>
</dbReference>
<dbReference type="InterPro" id="IPR013019">
    <property type="entry name" value="MAD_homology_MH1"/>
</dbReference>
<dbReference type="InterPro" id="IPR017855">
    <property type="entry name" value="SMAD-like_dom_sf"/>
</dbReference>
<dbReference type="InterPro" id="IPR001132">
    <property type="entry name" value="SMAD_dom_Dwarfin-type"/>
</dbReference>
<dbReference type="InterPro" id="IPR008984">
    <property type="entry name" value="SMAD_FHA_dom_sf"/>
</dbReference>
<dbReference type="InterPro" id="IPR036578">
    <property type="entry name" value="SMAD_MH1_sf"/>
</dbReference>
<dbReference type="PANTHER" id="PTHR13703:SF44">
    <property type="entry name" value="MOTHERS AGAINST DECAPENTAPLEGIC HOMOLOG 7"/>
    <property type="match status" value="1"/>
</dbReference>
<dbReference type="PANTHER" id="PTHR13703">
    <property type="entry name" value="SMAD"/>
    <property type="match status" value="1"/>
</dbReference>
<dbReference type="Pfam" id="PF03165">
    <property type="entry name" value="MH1"/>
    <property type="match status" value="1"/>
</dbReference>
<dbReference type="Pfam" id="PF03166">
    <property type="entry name" value="MH2"/>
    <property type="match status" value="1"/>
</dbReference>
<dbReference type="SMART" id="SM00523">
    <property type="entry name" value="DWA"/>
    <property type="match status" value="1"/>
</dbReference>
<dbReference type="SMART" id="SM00524">
    <property type="entry name" value="DWB"/>
    <property type="match status" value="1"/>
</dbReference>
<dbReference type="SUPFAM" id="SSF56366">
    <property type="entry name" value="SMAD MH1 domain"/>
    <property type="match status" value="1"/>
</dbReference>
<dbReference type="SUPFAM" id="SSF49879">
    <property type="entry name" value="SMAD/FHA domain"/>
    <property type="match status" value="1"/>
</dbReference>
<dbReference type="PROSITE" id="PS51075">
    <property type="entry name" value="MH1"/>
    <property type="match status" value="1"/>
</dbReference>
<dbReference type="PROSITE" id="PS51076">
    <property type="entry name" value="MH2"/>
    <property type="match status" value="1"/>
</dbReference>
<feature type="chain" id="PRO_0000090873" description="Mothers against decapentaplegic homolog 7">
    <location>
        <begin position="1"/>
        <end position="426"/>
    </location>
</feature>
<feature type="domain" description="MH1" evidence="3">
    <location>
        <begin position="64"/>
        <end position="207"/>
    </location>
</feature>
<feature type="domain" description="MH2" evidence="4">
    <location>
        <begin position="261"/>
        <end position="426"/>
    </location>
</feature>
<feature type="region of interest" description="Disordered" evidence="5">
    <location>
        <begin position="14"/>
        <end position="42"/>
    </location>
</feature>
<feature type="region of interest" description="Disordered" evidence="5">
    <location>
        <begin position="67"/>
        <end position="87"/>
    </location>
</feature>
<feature type="region of interest" description="Important for interaction with SMURF2" evidence="1">
    <location>
        <begin position="208"/>
        <end position="217"/>
    </location>
</feature>
<feature type="short sequence motif" description="PY-motif" evidence="1">
    <location>
        <begin position="208"/>
        <end position="211"/>
    </location>
</feature>
<feature type="compositionally biased region" description="Basic residues" evidence="5">
    <location>
        <begin position="67"/>
        <end position="76"/>
    </location>
</feature>
<feature type="binding site" evidence="1">
    <location>
        <position position="125"/>
    </location>
    <ligand>
        <name>Zn(2+)</name>
        <dbReference type="ChEBI" id="CHEBI:29105"/>
    </ligand>
</feature>
<feature type="binding site" evidence="1">
    <location>
        <position position="180"/>
    </location>
    <ligand>
        <name>Zn(2+)</name>
        <dbReference type="ChEBI" id="CHEBI:29105"/>
    </ligand>
</feature>
<feature type="binding site" evidence="1">
    <location>
        <position position="192"/>
    </location>
    <ligand>
        <name>Zn(2+)</name>
        <dbReference type="ChEBI" id="CHEBI:29105"/>
    </ligand>
</feature>
<feature type="binding site" evidence="1">
    <location>
        <position position="197"/>
    </location>
    <ligand>
        <name>Zn(2+)</name>
        <dbReference type="ChEBI" id="CHEBI:29105"/>
    </ligand>
</feature>
<feature type="modified residue" description="N6-acetyllysine; alternate" evidence="2">
    <location>
        <position position="64"/>
    </location>
</feature>
<feature type="modified residue" description="N6-acetyllysine; alternate" evidence="2">
    <location>
        <position position="70"/>
    </location>
</feature>
<feature type="modified residue" description="Phosphoserine" evidence="4 6">
    <location>
        <position position="249"/>
    </location>
</feature>
<feature type="cross-link" description="Glycyl lysine isopeptide (Lys-Gly) (interchain with G-Cter in ubiquitin); alternate" evidence="2">
    <location>
        <position position="64"/>
    </location>
</feature>
<feature type="cross-link" description="Glycyl lysine isopeptide (Lys-Gly) (interchain with G-Cter in ubiquitin); alternate" evidence="2">
    <location>
        <position position="70"/>
    </location>
</feature>
<feature type="splice variant" id="VSP_006181" description="In isoform B." evidence="11 12">
    <location>
        <position position="223"/>
    </location>
</feature>
<feature type="mutagenesis site" description="No effect on stability, nuclear localization or inhibitory function in TGFB signaling. Abolishes transcriptional activity." evidence="6">
    <original>S</original>
    <variation>A</variation>
    <location>
        <position position="249"/>
    </location>
</feature>
<feature type="mutagenesis site" description="No effect." evidence="6">
    <original>S</original>
    <variation>D</variation>
    <location>
        <position position="249"/>
    </location>
</feature>
<feature type="sequence conflict" description="In Ref. 3 and 4." evidence="13" ref="3 4">
    <original>A</original>
    <variation>V</variation>
    <location>
        <position position="233"/>
    </location>
</feature>
<feature type="strand" evidence="14">
    <location>
        <begin position="256"/>
        <end position="258"/>
    </location>
</feature>
<feature type="strand" evidence="14">
    <location>
        <begin position="262"/>
        <end position="268"/>
    </location>
</feature>
<feature type="strand" evidence="14">
    <location>
        <begin position="271"/>
        <end position="279"/>
    </location>
</feature>
<feature type="strand" evidence="14">
    <location>
        <begin position="281"/>
        <end position="288"/>
    </location>
</feature>
<feature type="strand" evidence="14">
    <location>
        <begin position="295"/>
        <end position="301"/>
    </location>
</feature>
<feature type="helix" evidence="14">
    <location>
        <begin position="308"/>
        <end position="317"/>
    </location>
</feature>
<feature type="strand" evidence="14">
    <location>
        <begin position="321"/>
        <end position="326"/>
    </location>
</feature>
<feature type="strand" evidence="14">
    <location>
        <begin position="329"/>
        <end position="334"/>
    </location>
</feature>
<feature type="strand" evidence="14">
    <location>
        <begin position="336"/>
        <end position="338"/>
    </location>
</feature>
<feature type="strand" evidence="14">
    <location>
        <begin position="340"/>
        <end position="343"/>
    </location>
</feature>
<feature type="helix" evidence="14">
    <location>
        <begin position="345"/>
        <end position="347"/>
    </location>
</feature>
<feature type="strand" evidence="14">
    <location>
        <begin position="352"/>
        <end position="354"/>
    </location>
</feature>
<feature type="strand" evidence="14">
    <location>
        <begin position="358"/>
        <end position="360"/>
    </location>
</feature>
<feature type="strand" evidence="14">
    <location>
        <begin position="365"/>
        <end position="369"/>
    </location>
</feature>
<feature type="helix" evidence="14">
    <location>
        <begin position="371"/>
        <end position="375"/>
    </location>
</feature>
<feature type="helix" evidence="14">
    <location>
        <begin position="383"/>
        <end position="387"/>
    </location>
</feature>
<feature type="helix" evidence="14">
    <location>
        <begin position="389"/>
        <end position="393"/>
    </location>
</feature>
<feature type="strand" evidence="14">
    <location>
        <begin position="394"/>
        <end position="400"/>
    </location>
</feature>
<feature type="helix" evidence="14">
    <location>
        <begin position="412"/>
        <end position="414"/>
    </location>
</feature>
<feature type="strand" evidence="14">
    <location>
        <begin position="415"/>
        <end position="423"/>
    </location>
</feature>
<keyword id="KW-0002">3D-structure</keyword>
<keyword id="KW-0007">Acetylation</keyword>
<keyword id="KW-0025">Alternative splicing</keyword>
<keyword id="KW-0963">Cytoplasm</keyword>
<keyword id="KW-1017">Isopeptide bond</keyword>
<keyword id="KW-0479">Metal-binding</keyword>
<keyword id="KW-0539">Nucleus</keyword>
<keyword id="KW-0597">Phosphoprotein</keyword>
<keyword id="KW-1185">Reference proteome</keyword>
<keyword id="KW-0804">Transcription</keyword>
<keyword id="KW-0805">Transcription regulation</keyword>
<keyword id="KW-0832">Ubl conjugation</keyword>
<keyword id="KW-0862">Zinc</keyword>
<comment type="function">
    <text evidence="2">Antagonist of signaling by TGF-beta (transforming growth factor) type 1 receptor superfamily members; has been shown to inhibit TGF-beta (Transforming growth factor) and activin signaling by associating with their receptors thus preventing SMAD2 access. Functions as an adapter to recruit SMURF2 to the TGF-beta receptor complex. Also acts by recruiting the PPP1R15A-PP1 complex to TGFBR1, which promotes its dephosphorylation. Positively regulates PDPK1 kinase activity by stimulating its dissociation from the 14-3-3 protein YWHAQ which acts as a negative regulator.</text>
</comment>
<comment type="subunit">
    <text evidence="1 2 7 8 9">Interacts with COPS5. Interacts with STAMBP. Interacts with PPP1R15A (By similarity). Interacts with NEDD4L. Interacts with RNF111, AXIN1 and AXIN2. Interacts with ACVR1B, SMURF1, SMURF2 and TGFBR1; SMAD7 recruits SMURF1 and SMURF2 to the TGF-beta receptor and regulates its degradation (By similarity). Interacts with WWP1. Interacts with PDPK1 (via PH domain) (By similarity). Ubiquitinated by WWP1. Interacts with TSC22D1/TSC-22; the interaction requires TGF-beta and the interaction is inhibited by TGFBR1 (By similarity).</text>
</comment>
<comment type="interaction">
    <interactant intactId="EBI-5274835">
        <id>O35253</id>
    </interactant>
    <interactant intactId="EBI-2365912">
        <id>O35625</id>
        <label>Axin1</label>
    </interactant>
    <organismsDiffer>false</organismsDiffer>
    <experiments>2</experiments>
</comment>
<comment type="interaction">
    <interactant intactId="EBI-5274835">
        <id>O35253</id>
    </interactant>
    <interactant intactId="EBI-1802585">
        <id>Q923E4</id>
        <label>Sirt1</label>
    </interactant>
    <organismsDiffer>false</organismsDiffer>
    <experiments>6</experiments>
</comment>
<comment type="interaction">
    <interactant intactId="EBI-5274835">
        <id>O35253</id>
    </interactant>
    <interactant intactId="EBI-2339946">
        <id>Q9C0C9</id>
        <label>UBE2O</label>
    </interactant>
    <organismsDiffer>true</organismsDiffer>
    <experiments>2</experiments>
</comment>
<comment type="subcellular location">
    <subcellularLocation>
        <location evidence="6 9">Nucleus</location>
    </subcellularLocation>
    <subcellularLocation>
        <location evidence="6 9">Cytoplasm</location>
    </subcellularLocation>
    <text evidence="2 9">Interaction with NEDD4L or RNF111 induces translocation from the nucleus to the cytoplasm (PubMed:15496141). TGF-beta stimulates its translocation from the nucleus to the cytoplasm. PDPK1 inhibits its translocation from the nucleus to the cytoplasm in response to TGF-beta (By similarity).</text>
</comment>
<comment type="alternative products">
    <event type="alternative splicing"/>
    <isoform>
        <id>O35253-1</id>
        <name>A</name>
        <sequence type="displayed"/>
    </isoform>
    <isoform>
        <id>O35253-2</id>
        <name>B</name>
        <sequence type="described" ref="VSP_006181"/>
    </isoform>
</comment>
<comment type="tissue specificity">
    <text>Ubiquitous in various organs, with higher levels in brain and kidney.</text>
</comment>
<comment type="PTM">
    <text evidence="2 6">Phosphorylation on Ser-249 does not affect its stability, nuclear localization or inhibitory function in TGFB signaling; however it affects its ability to regulate transcription (PubMed:11278814). Phosphorylated by PDPK1 (By similarity).</text>
</comment>
<comment type="PTM">
    <text evidence="2 7 8 10">Ubiquitinated by WWP1 (PubMed:15221015). Polyubiquitinated by RNF111, which is enhanced by AXIN1 and promotes proteasomal degradation (PubMed:14657019). In response to TGF-beta, ubiquitinated by SMURF1; which promotes its degradation (By similarity). Ubiquitinated by ARK2C, promoting proteasomal degradation, leading to enhance the BMP-Smad signaling (PubMed:23610558).</text>
</comment>
<comment type="PTM">
    <text evidence="2">Acetylation prevents ubiquitination and degradation mediated by SMURF1.</text>
</comment>
<comment type="similarity">
    <text evidence="13">Belongs to the dwarfin/SMAD family.</text>
</comment>
<name>SMAD7_MOUSE</name>
<evidence type="ECO:0000250" key="1"/>
<evidence type="ECO:0000250" key="2">
    <source>
        <dbReference type="UniProtKB" id="O15105"/>
    </source>
</evidence>
<evidence type="ECO:0000255" key="3">
    <source>
        <dbReference type="PROSITE-ProRule" id="PRU00438"/>
    </source>
</evidence>
<evidence type="ECO:0000255" key="4">
    <source>
        <dbReference type="PROSITE-ProRule" id="PRU00439"/>
    </source>
</evidence>
<evidence type="ECO:0000256" key="5">
    <source>
        <dbReference type="SAM" id="MobiDB-lite"/>
    </source>
</evidence>
<evidence type="ECO:0000269" key="6">
    <source>
    </source>
</evidence>
<evidence type="ECO:0000269" key="7">
    <source>
    </source>
</evidence>
<evidence type="ECO:0000269" key="8">
    <source>
    </source>
</evidence>
<evidence type="ECO:0000269" key="9">
    <source>
    </source>
</evidence>
<evidence type="ECO:0000269" key="10">
    <source>
    </source>
</evidence>
<evidence type="ECO:0000303" key="11">
    <source>
    </source>
</evidence>
<evidence type="ECO:0000303" key="12">
    <source ref="3"/>
</evidence>
<evidence type="ECO:0000305" key="13"/>
<evidence type="ECO:0007829" key="14">
    <source>
        <dbReference type="PDB" id="7CD1"/>
    </source>
</evidence>
<gene>
    <name type="primary">Smad7</name>
    <name type="synonym">Madh7</name>
    <name type="synonym">Madh8</name>
</gene>
<accession>O35253</accession>
<accession>O88709</accession>
<proteinExistence type="evidence at protein level"/>